<sequence>MLTRSWRQRNLASLLYSLSHRRLLSQKIPDPKHVFTDPSNNEIVDSKHFFTNPSRDNLIEEEAIAKSIEASIKNQRRRRGKQVSSALAAALFATIFGYTIGYKVLYLHEHSFIPAYPVPKARNFSSNELKHINVDEIKHLAEYKLLEKLSMHPMIKEQYGVPLHKSQGISLESRQFSVWRQDVDPCIAGILIAPIDSPKDEHTWHNVPPLCKWRITNRSVNFRSFADQVLGRVGIDSSDLIQVIKPEKDCGDFKYGRPPHHSDGPRTMHICFLGEMKLGNEDLIIFRGTCHIDLKLQQVDLLRKENDKLVRYVLYHETKE</sequence>
<accession>C5DDY0</accession>
<organism>
    <name type="scientific">Lachancea thermotolerans (strain ATCC 56472 / CBS 6340 / NRRL Y-8284)</name>
    <name type="common">Yeast</name>
    <name type="synonym">Kluyveromyces thermotolerans</name>
    <dbReference type="NCBI Taxonomy" id="559295"/>
    <lineage>
        <taxon>Eukaryota</taxon>
        <taxon>Fungi</taxon>
        <taxon>Dikarya</taxon>
        <taxon>Ascomycota</taxon>
        <taxon>Saccharomycotina</taxon>
        <taxon>Saccharomycetes</taxon>
        <taxon>Saccharomycetales</taxon>
        <taxon>Saccharomycetaceae</taxon>
        <taxon>Lachancea</taxon>
    </lineage>
</organism>
<comment type="subcellular location">
    <subcellularLocation>
        <location evidence="2">Mitochondrion membrane</location>
        <topology evidence="2">Single-pass membrane protein</topology>
    </subcellularLocation>
</comment>
<comment type="similarity">
    <text evidence="2">Belongs to the AIM39 family.</text>
</comment>
<evidence type="ECO:0000255" key="1"/>
<evidence type="ECO:0000305" key="2"/>
<name>AIM39_LACTC</name>
<keyword id="KW-0472">Membrane</keyword>
<keyword id="KW-0496">Mitochondrion</keyword>
<keyword id="KW-1185">Reference proteome</keyword>
<keyword id="KW-0809">Transit peptide</keyword>
<keyword id="KW-0812">Transmembrane</keyword>
<keyword id="KW-1133">Transmembrane helix</keyword>
<feature type="transit peptide" description="Mitochondrion" evidence="1">
    <location>
        <begin position="1"/>
        <end position="31"/>
    </location>
</feature>
<feature type="chain" id="PRO_0000399845" description="Altered inheritance of mitochondria protein 39, mitochondrial">
    <location>
        <begin position="32"/>
        <end position="320"/>
    </location>
</feature>
<feature type="transmembrane region" description="Helical" evidence="1">
    <location>
        <begin position="83"/>
        <end position="102"/>
    </location>
</feature>
<reference key="1">
    <citation type="journal article" date="2009" name="Genome Res.">
        <title>Comparative genomics of protoploid Saccharomycetaceae.</title>
        <authorList>
            <consortium name="The Genolevures Consortium"/>
            <person name="Souciet J.-L."/>
            <person name="Dujon B."/>
            <person name="Gaillardin C."/>
            <person name="Johnston M."/>
            <person name="Baret P.V."/>
            <person name="Cliften P."/>
            <person name="Sherman D.J."/>
            <person name="Weissenbach J."/>
            <person name="Westhof E."/>
            <person name="Wincker P."/>
            <person name="Jubin C."/>
            <person name="Poulain J."/>
            <person name="Barbe V."/>
            <person name="Segurens B."/>
            <person name="Artiguenave F."/>
            <person name="Anthouard V."/>
            <person name="Vacherie B."/>
            <person name="Val M.-E."/>
            <person name="Fulton R.S."/>
            <person name="Minx P."/>
            <person name="Wilson R."/>
            <person name="Durrens P."/>
            <person name="Jean G."/>
            <person name="Marck C."/>
            <person name="Martin T."/>
            <person name="Nikolski M."/>
            <person name="Rolland T."/>
            <person name="Seret M.-L."/>
            <person name="Casaregola S."/>
            <person name="Despons L."/>
            <person name="Fairhead C."/>
            <person name="Fischer G."/>
            <person name="Lafontaine I."/>
            <person name="Leh V."/>
            <person name="Lemaire M."/>
            <person name="de Montigny J."/>
            <person name="Neuveglise C."/>
            <person name="Thierry A."/>
            <person name="Blanc-Lenfle I."/>
            <person name="Bleykasten C."/>
            <person name="Diffels J."/>
            <person name="Fritsch E."/>
            <person name="Frangeul L."/>
            <person name="Goeffon A."/>
            <person name="Jauniaux N."/>
            <person name="Kachouri-Lafond R."/>
            <person name="Payen C."/>
            <person name="Potier S."/>
            <person name="Pribylova L."/>
            <person name="Ozanne C."/>
            <person name="Richard G.-F."/>
            <person name="Sacerdot C."/>
            <person name="Straub M.-L."/>
            <person name="Talla E."/>
        </authorList>
    </citation>
    <scope>NUCLEOTIDE SEQUENCE [LARGE SCALE GENOMIC DNA]</scope>
    <source>
        <strain>ATCC 56472 / CBS 6340 / NRRL Y-8284</strain>
    </source>
</reference>
<gene>
    <name type="primary">AIM39</name>
    <name type="ordered locus">KLTH0C04708g</name>
</gene>
<protein>
    <recommendedName>
        <fullName>Altered inheritance of mitochondria protein 39, mitochondrial</fullName>
    </recommendedName>
</protein>
<proteinExistence type="inferred from homology"/>
<dbReference type="EMBL" id="CU928167">
    <property type="protein sequence ID" value="CAR21991.1"/>
    <property type="molecule type" value="Genomic_DNA"/>
</dbReference>
<dbReference type="RefSeq" id="XP_002552429.1">
    <property type="nucleotide sequence ID" value="XM_002552383.1"/>
</dbReference>
<dbReference type="FunCoup" id="C5DDY0">
    <property type="interactions" value="37"/>
</dbReference>
<dbReference type="GeneID" id="8291296"/>
<dbReference type="KEGG" id="lth:KLTH0C04708g"/>
<dbReference type="eggNOG" id="ENOG502QT12">
    <property type="taxonomic scope" value="Eukaryota"/>
</dbReference>
<dbReference type="HOGENOM" id="CLU_058942_0_0_1"/>
<dbReference type="InParanoid" id="C5DDY0"/>
<dbReference type="OMA" id="WCEDQDP"/>
<dbReference type="OrthoDB" id="4058511at2759"/>
<dbReference type="Proteomes" id="UP000002036">
    <property type="component" value="Chromosome C"/>
</dbReference>
<dbReference type="GO" id="GO:0031966">
    <property type="term" value="C:mitochondrial membrane"/>
    <property type="evidence" value="ECO:0007669"/>
    <property type="project" value="UniProtKB-SubCell"/>
</dbReference>